<accession>Q5X9E5</accession>
<reference key="1">
    <citation type="journal article" date="2004" name="J. Infect. Dis.">
        <title>Progress toward characterization of the group A Streptococcus metagenome: complete genome sequence of a macrolide-resistant serotype M6 strain.</title>
        <authorList>
            <person name="Banks D.J."/>
            <person name="Porcella S.F."/>
            <person name="Barbian K.D."/>
            <person name="Beres S.B."/>
            <person name="Philips L.E."/>
            <person name="Voyich J.M."/>
            <person name="DeLeo F.R."/>
            <person name="Martin J.M."/>
            <person name="Somerville G.A."/>
            <person name="Musser J.M."/>
        </authorList>
    </citation>
    <scope>NUCLEOTIDE SEQUENCE [LARGE SCALE GENOMIC DNA]</scope>
    <source>
        <strain>ATCC BAA-946 / MGAS10394</strain>
    </source>
</reference>
<sequence>MKLQKPKGTQDILPGDAAKWQYVESVARDTFSQYNYGEIRTPMFEHYEVISRSVGDTTDIVTKEMYDFYDKGDRHITLRPEGTAPVVRSYVENKLFAPEVQKPVKLYYIGSMFRYERPQAGRLREFHQIGVECFGAANPATDVETIAMAYHLFEKLGIKDVTLHLNSLGSPESRAAYRQALIDYLTPMRDQLSKDSQRRLDENPLRVLDSKEKEDKLAVEKAPSILDYLDEESQAHFEAVKDMLEALDIPYVIDTNMVRGLDYYNHTIFEFITSVEGSDLTICAGGRYDSLVGYFGGPETPGFGFGLGLERLLMVIEKQGITLPIETEMDVYLAVLGDGANSKALELVQAIRRQGFTAERDYLGRKIKAQFKSADTFKAKLVMTLGESEVEAGKAVIKNNRSRQEVEVSFEDMMTNFANISEQLLS</sequence>
<keyword id="KW-0030">Aminoacyl-tRNA synthetase</keyword>
<keyword id="KW-0067">ATP-binding</keyword>
<keyword id="KW-0963">Cytoplasm</keyword>
<keyword id="KW-0436">Ligase</keyword>
<keyword id="KW-0547">Nucleotide-binding</keyword>
<keyword id="KW-0648">Protein biosynthesis</keyword>
<organism>
    <name type="scientific">Streptococcus pyogenes serotype M6 (strain ATCC BAA-946 / MGAS10394)</name>
    <dbReference type="NCBI Taxonomy" id="286636"/>
    <lineage>
        <taxon>Bacteria</taxon>
        <taxon>Bacillati</taxon>
        <taxon>Bacillota</taxon>
        <taxon>Bacilli</taxon>
        <taxon>Lactobacillales</taxon>
        <taxon>Streptococcaceae</taxon>
        <taxon>Streptococcus</taxon>
    </lineage>
</organism>
<name>SYH_STRP6</name>
<comment type="catalytic activity">
    <reaction evidence="2">
        <text>tRNA(His) + L-histidine + ATP = L-histidyl-tRNA(His) + AMP + diphosphate + H(+)</text>
        <dbReference type="Rhea" id="RHEA:17313"/>
        <dbReference type="Rhea" id="RHEA-COMP:9665"/>
        <dbReference type="Rhea" id="RHEA-COMP:9689"/>
        <dbReference type="ChEBI" id="CHEBI:15378"/>
        <dbReference type="ChEBI" id="CHEBI:30616"/>
        <dbReference type="ChEBI" id="CHEBI:33019"/>
        <dbReference type="ChEBI" id="CHEBI:57595"/>
        <dbReference type="ChEBI" id="CHEBI:78442"/>
        <dbReference type="ChEBI" id="CHEBI:78527"/>
        <dbReference type="ChEBI" id="CHEBI:456215"/>
        <dbReference type="EC" id="6.1.1.21"/>
    </reaction>
</comment>
<comment type="subunit">
    <text evidence="2">Homodimer.</text>
</comment>
<comment type="subcellular location">
    <subcellularLocation>
        <location evidence="2">Cytoplasm</location>
    </subcellularLocation>
</comment>
<comment type="similarity">
    <text evidence="2">Belongs to the class-II aminoacyl-tRNA synthetase family.</text>
</comment>
<comment type="sequence caution" evidence="3">
    <conflict type="erroneous initiation">
        <sequence resource="EMBL-CDS" id="AAT87968"/>
    </conflict>
</comment>
<feature type="initiator methionine" description="Removed" evidence="1">
    <location>
        <position position="1"/>
    </location>
</feature>
<feature type="chain" id="PRO_0000136270" description="Histidine--tRNA ligase">
    <location>
        <begin position="2"/>
        <end position="426"/>
    </location>
</feature>
<gene>
    <name evidence="2" type="primary">hisS</name>
    <name type="ordered locus">M6_Spy1833</name>
</gene>
<protein>
    <recommendedName>
        <fullName evidence="2">Histidine--tRNA ligase</fullName>
        <ecNumber evidence="2">6.1.1.21</ecNumber>
    </recommendedName>
    <alternativeName>
        <fullName evidence="2">Histidyl-tRNA synthetase</fullName>
        <shortName evidence="2">HisRS</shortName>
    </alternativeName>
</protein>
<proteinExistence type="inferred from homology"/>
<evidence type="ECO:0000250" key="1"/>
<evidence type="ECO:0000255" key="2">
    <source>
        <dbReference type="HAMAP-Rule" id="MF_00127"/>
    </source>
</evidence>
<evidence type="ECO:0000305" key="3"/>
<dbReference type="EC" id="6.1.1.21" evidence="2"/>
<dbReference type="EMBL" id="CP000003">
    <property type="protein sequence ID" value="AAT87968.1"/>
    <property type="status" value="ALT_INIT"/>
    <property type="molecule type" value="Genomic_DNA"/>
</dbReference>
<dbReference type="RefSeq" id="WP_011185087.1">
    <property type="nucleotide sequence ID" value="NC_006086.1"/>
</dbReference>
<dbReference type="SMR" id="Q5X9E5"/>
<dbReference type="KEGG" id="spa:M6_Spy1833"/>
<dbReference type="HOGENOM" id="CLU_025113_1_1_9"/>
<dbReference type="Proteomes" id="UP000001167">
    <property type="component" value="Chromosome"/>
</dbReference>
<dbReference type="GO" id="GO:0005737">
    <property type="term" value="C:cytoplasm"/>
    <property type="evidence" value="ECO:0007669"/>
    <property type="project" value="UniProtKB-SubCell"/>
</dbReference>
<dbReference type="GO" id="GO:0005524">
    <property type="term" value="F:ATP binding"/>
    <property type="evidence" value="ECO:0007669"/>
    <property type="project" value="UniProtKB-UniRule"/>
</dbReference>
<dbReference type="GO" id="GO:0140096">
    <property type="term" value="F:catalytic activity, acting on a protein"/>
    <property type="evidence" value="ECO:0007669"/>
    <property type="project" value="UniProtKB-ARBA"/>
</dbReference>
<dbReference type="GO" id="GO:0004821">
    <property type="term" value="F:histidine-tRNA ligase activity"/>
    <property type="evidence" value="ECO:0007669"/>
    <property type="project" value="UniProtKB-UniRule"/>
</dbReference>
<dbReference type="GO" id="GO:0016740">
    <property type="term" value="F:transferase activity"/>
    <property type="evidence" value="ECO:0007669"/>
    <property type="project" value="UniProtKB-ARBA"/>
</dbReference>
<dbReference type="GO" id="GO:0006427">
    <property type="term" value="P:histidyl-tRNA aminoacylation"/>
    <property type="evidence" value="ECO:0007669"/>
    <property type="project" value="UniProtKB-UniRule"/>
</dbReference>
<dbReference type="CDD" id="cd00773">
    <property type="entry name" value="HisRS-like_core"/>
    <property type="match status" value="1"/>
</dbReference>
<dbReference type="CDD" id="cd00859">
    <property type="entry name" value="HisRS_anticodon"/>
    <property type="match status" value="1"/>
</dbReference>
<dbReference type="FunFam" id="3.30.930.10:FF:000005">
    <property type="entry name" value="Histidine--tRNA ligase"/>
    <property type="match status" value="1"/>
</dbReference>
<dbReference type="Gene3D" id="3.40.50.800">
    <property type="entry name" value="Anticodon-binding domain"/>
    <property type="match status" value="1"/>
</dbReference>
<dbReference type="Gene3D" id="3.30.930.10">
    <property type="entry name" value="Bira Bifunctional Protein, Domain 2"/>
    <property type="match status" value="1"/>
</dbReference>
<dbReference type="HAMAP" id="MF_00127">
    <property type="entry name" value="His_tRNA_synth"/>
    <property type="match status" value="1"/>
</dbReference>
<dbReference type="InterPro" id="IPR006195">
    <property type="entry name" value="aa-tRNA-synth_II"/>
</dbReference>
<dbReference type="InterPro" id="IPR045864">
    <property type="entry name" value="aa-tRNA-synth_II/BPL/LPL"/>
</dbReference>
<dbReference type="InterPro" id="IPR004154">
    <property type="entry name" value="Anticodon-bd"/>
</dbReference>
<dbReference type="InterPro" id="IPR036621">
    <property type="entry name" value="Anticodon-bd_dom_sf"/>
</dbReference>
<dbReference type="InterPro" id="IPR015807">
    <property type="entry name" value="His-tRNA-ligase"/>
</dbReference>
<dbReference type="InterPro" id="IPR041715">
    <property type="entry name" value="HisRS-like_core"/>
</dbReference>
<dbReference type="InterPro" id="IPR004516">
    <property type="entry name" value="HisRS/HisZ"/>
</dbReference>
<dbReference type="InterPro" id="IPR033656">
    <property type="entry name" value="HisRS_anticodon"/>
</dbReference>
<dbReference type="NCBIfam" id="TIGR00442">
    <property type="entry name" value="hisS"/>
    <property type="match status" value="1"/>
</dbReference>
<dbReference type="PANTHER" id="PTHR43707:SF1">
    <property type="entry name" value="HISTIDINE--TRNA LIGASE, MITOCHONDRIAL-RELATED"/>
    <property type="match status" value="1"/>
</dbReference>
<dbReference type="PANTHER" id="PTHR43707">
    <property type="entry name" value="HISTIDYL-TRNA SYNTHETASE"/>
    <property type="match status" value="1"/>
</dbReference>
<dbReference type="Pfam" id="PF03129">
    <property type="entry name" value="HGTP_anticodon"/>
    <property type="match status" value="1"/>
</dbReference>
<dbReference type="Pfam" id="PF13393">
    <property type="entry name" value="tRNA-synt_His"/>
    <property type="match status" value="1"/>
</dbReference>
<dbReference type="PIRSF" id="PIRSF001549">
    <property type="entry name" value="His-tRNA_synth"/>
    <property type="match status" value="1"/>
</dbReference>
<dbReference type="SUPFAM" id="SSF52954">
    <property type="entry name" value="Class II aaRS ABD-related"/>
    <property type="match status" value="1"/>
</dbReference>
<dbReference type="SUPFAM" id="SSF55681">
    <property type="entry name" value="Class II aaRS and biotin synthetases"/>
    <property type="match status" value="1"/>
</dbReference>
<dbReference type="PROSITE" id="PS50862">
    <property type="entry name" value="AA_TRNA_LIGASE_II"/>
    <property type="match status" value="1"/>
</dbReference>